<accession>Q12AC2</accession>
<proteinExistence type="inferred from homology"/>
<comment type="function">
    <text evidence="1">GTPase that plays an essential role in the late steps of ribosome biogenesis.</text>
</comment>
<comment type="subunit">
    <text evidence="1">Associates with the 50S ribosomal subunit.</text>
</comment>
<comment type="similarity">
    <text evidence="1">Belongs to the TRAFAC class TrmE-Era-EngA-EngB-Septin-like GTPase superfamily. EngA (Der) GTPase family.</text>
</comment>
<sequence length="447" mass="49144">MKPVIALVGRPNVGKSTIFNRLTKTRDAIVADFAGLTRDRHYGNGKLGSHEYIVIDTGGFEPDAASGIYKEMAKQTRQAVAEADVVIFVVDARAGISAQDHDIANFLRKLGKPTVLTANKAEGMTEGVQFSEFFELGLGEVLPVSASHGQGMRSLVDLALAPLHLADPDEEAEPQDPSVIRLAVAGRPNVGKSTLINTWLGEERLVSFDLPGTTRDAISVPFERAGQKFELIDTAGLRRKGKVFEAIEKFSVVKTLQAIEGANVVLLLLDATQGVTDQDAHIAGYILESGRAVVLAINKWDAVDAYQRETLERSIETRLAFLKFASIHKISAIKRQGLAPVWKSIVQAHASANRKMSTPVLTRLLLEAVQFQQPQRSGMFRPKMRYAHQGGMNPPIIIIHGNSLEHVTEAYKRYLEGRFRKEFDLVGTPMRIQMKSSHNPFTDKDSA</sequence>
<dbReference type="EMBL" id="CP000316">
    <property type="protein sequence ID" value="ABE44520.1"/>
    <property type="molecule type" value="Genomic_DNA"/>
</dbReference>
<dbReference type="RefSeq" id="WP_011483518.1">
    <property type="nucleotide sequence ID" value="NC_007948.1"/>
</dbReference>
<dbReference type="SMR" id="Q12AC2"/>
<dbReference type="STRING" id="296591.Bpro_2604"/>
<dbReference type="KEGG" id="pol:Bpro_2604"/>
<dbReference type="eggNOG" id="COG1160">
    <property type="taxonomic scope" value="Bacteria"/>
</dbReference>
<dbReference type="HOGENOM" id="CLU_016077_6_2_4"/>
<dbReference type="OrthoDB" id="9805918at2"/>
<dbReference type="Proteomes" id="UP000001983">
    <property type="component" value="Chromosome"/>
</dbReference>
<dbReference type="GO" id="GO:0005525">
    <property type="term" value="F:GTP binding"/>
    <property type="evidence" value="ECO:0007669"/>
    <property type="project" value="UniProtKB-UniRule"/>
</dbReference>
<dbReference type="GO" id="GO:0043022">
    <property type="term" value="F:ribosome binding"/>
    <property type="evidence" value="ECO:0007669"/>
    <property type="project" value="TreeGrafter"/>
</dbReference>
<dbReference type="GO" id="GO:0042254">
    <property type="term" value="P:ribosome biogenesis"/>
    <property type="evidence" value="ECO:0007669"/>
    <property type="project" value="UniProtKB-KW"/>
</dbReference>
<dbReference type="CDD" id="cd01894">
    <property type="entry name" value="EngA1"/>
    <property type="match status" value="1"/>
</dbReference>
<dbReference type="CDD" id="cd01895">
    <property type="entry name" value="EngA2"/>
    <property type="match status" value="1"/>
</dbReference>
<dbReference type="FunFam" id="3.30.300.20:FF:000004">
    <property type="entry name" value="GTPase Der"/>
    <property type="match status" value="1"/>
</dbReference>
<dbReference type="FunFam" id="3.40.50.300:FF:000040">
    <property type="entry name" value="GTPase Der"/>
    <property type="match status" value="1"/>
</dbReference>
<dbReference type="FunFam" id="3.40.50.300:FF:000057">
    <property type="entry name" value="GTPase Der"/>
    <property type="match status" value="1"/>
</dbReference>
<dbReference type="Gene3D" id="3.30.300.20">
    <property type="match status" value="1"/>
</dbReference>
<dbReference type="Gene3D" id="3.40.50.300">
    <property type="entry name" value="P-loop containing nucleotide triphosphate hydrolases"/>
    <property type="match status" value="2"/>
</dbReference>
<dbReference type="HAMAP" id="MF_00195">
    <property type="entry name" value="GTPase_Der"/>
    <property type="match status" value="1"/>
</dbReference>
<dbReference type="InterPro" id="IPR031166">
    <property type="entry name" value="G_ENGA"/>
</dbReference>
<dbReference type="InterPro" id="IPR006073">
    <property type="entry name" value="GTP-bd"/>
</dbReference>
<dbReference type="InterPro" id="IPR016484">
    <property type="entry name" value="GTPase_Der"/>
</dbReference>
<dbReference type="InterPro" id="IPR032859">
    <property type="entry name" value="KH_dom-like"/>
</dbReference>
<dbReference type="InterPro" id="IPR015946">
    <property type="entry name" value="KH_dom-like_a/b"/>
</dbReference>
<dbReference type="InterPro" id="IPR027417">
    <property type="entry name" value="P-loop_NTPase"/>
</dbReference>
<dbReference type="InterPro" id="IPR005225">
    <property type="entry name" value="Small_GTP-bd"/>
</dbReference>
<dbReference type="NCBIfam" id="TIGR03594">
    <property type="entry name" value="GTPase_EngA"/>
    <property type="match status" value="1"/>
</dbReference>
<dbReference type="NCBIfam" id="TIGR00231">
    <property type="entry name" value="small_GTP"/>
    <property type="match status" value="2"/>
</dbReference>
<dbReference type="PANTHER" id="PTHR43834">
    <property type="entry name" value="GTPASE DER"/>
    <property type="match status" value="1"/>
</dbReference>
<dbReference type="PANTHER" id="PTHR43834:SF6">
    <property type="entry name" value="GTPASE DER"/>
    <property type="match status" value="1"/>
</dbReference>
<dbReference type="Pfam" id="PF14714">
    <property type="entry name" value="KH_dom-like"/>
    <property type="match status" value="1"/>
</dbReference>
<dbReference type="Pfam" id="PF01926">
    <property type="entry name" value="MMR_HSR1"/>
    <property type="match status" value="2"/>
</dbReference>
<dbReference type="PIRSF" id="PIRSF006485">
    <property type="entry name" value="GTP-binding_EngA"/>
    <property type="match status" value="1"/>
</dbReference>
<dbReference type="PRINTS" id="PR00326">
    <property type="entry name" value="GTP1OBG"/>
</dbReference>
<dbReference type="SUPFAM" id="SSF52540">
    <property type="entry name" value="P-loop containing nucleoside triphosphate hydrolases"/>
    <property type="match status" value="2"/>
</dbReference>
<dbReference type="PROSITE" id="PS51712">
    <property type="entry name" value="G_ENGA"/>
    <property type="match status" value="2"/>
</dbReference>
<keyword id="KW-0342">GTP-binding</keyword>
<keyword id="KW-0547">Nucleotide-binding</keyword>
<keyword id="KW-1185">Reference proteome</keyword>
<keyword id="KW-0677">Repeat</keyword>
<keyword id="KW-0690">Ribosome biogenesis</keyword>
<reference key="1">
    <citation type="journal article" date="2008" name="Appl. Environ. Microbiol.">
        <title>The genome of Polaromonas sp. strain JS666: insights into the evolution of a hydrocarbon- and xenobiotic-degrading bacterium, and features of relevance to biotechnology.</title>
        <authorList>
            <person name="Mattes T.E."/>
            <person name="Alexander A.K."/>
            <person name="Richardson P.M."/>
            <person name="Munk A.C."/>
            <person name="Han C.S."/>
            <person name="Stothard P."/>
            <person name="Coleman N.V."/>
        </authorList>
    </citation>
    <scope>NUCLEOTIDE SEQUENCE [LARGE SCALE GENOMIC DNA]</scope>
    <source>
        <strain>JS666 / ATCC BAA-500</strain>
    </source>
</reference>
<organism>
    <name type="scientific">Polaromonas sp. (strain JS666 / ATCC BAA-500)</name>
    <dbReference type="NCBI Taxonomy" id="296591"/>
    <lineage>
        <taxon>Bacteria</taxon>
        <taxon>Pseudomonadati</taxon>
        <taxon>Pseudomonadota</taxon>
        <taxon>Betaproteobacteria</taxon>
        <taxon>Burkholderiales</taxon>
        <taxon>Comamonadaceae</taxon>
        <taxon>Polaromonas</taxon>
    </lineage>
</organism>
<protein>
    <recommendedName>
        <fullName evidence="1">GTPase Der</fullName>
    </recommendedName>
    <alternativeName>
        <fullName evidence="1">GTP-binding protein EngA</fullName>
    </alternativeName>
</protein>
<evidence type="ECO:0000255" key="1">
    <source>
        <dbReference type="HAMAP-Rule" id="MF_00195"/>
    </source>
</evidence>
<gene>
    <name evidence="1" type="primary">der</name>
    <name type="synonym">engA</name>
    <name type="ordered locus">Bpro_2604</name>
</gene>
<feature type="chain" id="PRO_1000011689" description="GTPase Der">
    <location>
        <begin position="1"/>
        <end position="447"/>
    </location>
</feature>
<feature type="domain" description="EngA-type G 1">
    <location>
        <begin position="3"/>
        <end position="167"/>
    </location>
</feature>
<feature type="domain" description="EngA-type G 2">
    <location>
        <begin position="180"/>
        <end position="353"/>
    </location>
</feature>
<feature type="domain" description="KH-like" evidence="1">
    <location>
        <begin position="354"/>
        <end position="438"/>
    </location>
</feature>
<feature type="binding site" evidence="1">
    <location>
        <begin position="9"/>
        <end position="16"/>
    </location>
    <ligand>
        <name>GTP</name>
        <dbReference type="ChEBI" id="CHEBI:37565"/>
        <label>1</label>
    </ligand>
</feature>
<feature type="binding site" evidence="1">
    <location>
        <begin position="56"/>
        <end position="60"/>
    </location>
    <ligand>
        <name>GTP</name>
        <dbReference type="ChEBI" id="CHEBI:37565"/>
        <label>1</label>
    </ligand>
</feature>
<feature type="binding site" evidence="1">
    <location>
        <begin position="119"/>
        <end position="122"/>
    </location>
    <ligand>
        <name>GTP</name>
        <dbReference type="ChEBI" id="CHEBI:37565"/>
        <label>1</label>
    </ligand>
</feature>
<feature type="binding site" evidence="1">
    <location>
        <begin position="186"/>
        <end position="193"/>
    </location>
    <ligand>
        <name>GTP</name>
        <dbReference type="ChEBI" id="CHEBI:37565"/>
        <label>2</label>
    </ligand>
</feature>
<feature type="binding site" evidence="1">
    <location>
        <begin position="233"/>
        <end position="237"/>
    </location>
    <ligand>
        <name>GTP</name>
        <dbReference type="ChEBI" id="CHEBI:37565"/>
        <label>2</label>
    </ligand>
</feature>
<feature type="binding site" evidence="1">
    <location>
        <begin position="298"/>
        <end position="301"/>
    </location>
    <ligand>
        <name>GTP</name>
        <dbReference type="ChEBI" id="CHEBI:37565"/>
        <label>2</label>
    </ligand>
</feature>
<name>DER_POLSJ</name>